<organism>
    <name type="scientific">Arabidopsis thaliana</name>
    <name type="common">Mouse-ear cress</name>
    <dbReference type="NCBI Taxonomy" id="3702"/>
    <lineage>
        <taxon>Eukaryota</taxon>
        <taxon>Viridiplantae</taxon>
        <taxon>Streptophyta</taxon>
        <taxon>Embryophyta</taxon>
        <taxon>Tracheophyta</taxon>
        <taxon>Spermatophyta</taxon>
        <taxon>Magnoliopsida</taxon>
        <taxon>eudicotyledons</taxon>
        <taxon>Gunneridae</taxon>
        <taxon>Pentapetalae</taxon>
        <taxon>rosids</taxon>
        <taxon>malvids</taxon>
        <taxon>Brassicales</taxon>
        <taxon>Brassicaceae</taxon>
        <taxon>Camelineae</taxon>
        <taxon>Arabidopsis</taxon>
    </lineage>
</organism>
<protein>
    <recommendedName>
        <fullName>GDSL esterase/lipase At1g33811</fullName>
        <ecNumber>3.1.1.-</ecNumber>
    </recommendedName>
    <alternativeName>
        <fullName>Extracellular lipase At1g33811</fullName>
    </alternativeName>
</protein>
<dbReference type="EC" id="3.1.1.-"/>
<dbReference type="EMBL" id="AC010164">
    <property type="protein sequence ID" value="AAF97292.1"/>
    <property type="status" value="ALT_SEQ"/>
    <property type="molecule type" value="Genomic_DNA"/>
</dbReference>
<dbReference type="EMBL" id="CP002684">
    <property type="protein sequence ID" value="AEE31628.1"/>
    <property type="molecule type" value="Genomic_DNA"/>
</dbReference>
<dbReference type="EMBL" id="AY099832">
    <property type="protein sequence ID" value="AAM20683.1"/>
    <property type="molecule type" value="mRNA"/>
</dbReference>
<dbReference type="EMBL" id="BT000322">
    <property type="protein sequence ID" value="AAN15641.1"/>
    <property type="molecule type" value="mRNA"/>
</dbReference>
<dbReference type="PIR" id="F86461">
    <property type="entry name" value="F86461"/>
</dbReference>
<dbReference type="RefSeq" id="NP_564430.1">
    <property type="nucleotide sequence ID" value="NM_103101.4"/>
</dbReference>
<dbReference type="SMR" id="Q8L5Z1"/>
<dbReference type="FunCoup" id="Q8L5Z1">
    <property type="interactions" value="103"/>
</dbReference>
<dbReference type="STRING" id="3702.Q8L5Z1"/>
<dbReference type="GlyGen" id="Q8L5Z1">
    <property type="glycosylation" value="3 sites"/>
</dbReference>
<dbReference type="PaxDb" id="3702-AT1G33811.1"/>
<dbReference type="ProteomicsDB" id="221967"/>
<dbReference type="EnsemblPlants" id="AT1G33811.1">
    <property type="protein sequence ID" value="AT1G33811.1"/>
    <property type="gene ID" value="AT1G33811"/>
</dbReference>
<dbReference type="GeneID" id="840274"/>
<dbReference type="Gramene" id="AT1G33811.1">
    <property type="protein sequence ID" value="AT1G33811.1"/>
    <property type="gene ID" value="AT1G33811"/>
</dbReference>
<dbReference type="KEGG" id="ath:AT1G33811"/>
<dbReference type="Araport" id="AT1G33811"/>
<dbReference type="TAIR" id="AT1G33811"/>
<dbReference type="eggNOG" id="ENOG502QQAP">
    <property type="taxonomic scope" value="Eukaryota"/>
</dbReference>
<dbReference type="HOGENOM" id="CLU_015101_0_0_1"/>
<dbReference type="InParanoid" id="Q8L5Z1"/>
<dbReference type="OMA" id="QPCEDRS"/>
<dbReference type="PhylomeDB" id="Q8L5Z1"/>
<dbReference type="BioCyc" id="ARA:AT1G33811-MONOMER"/>
<dbReference type="PRO" id="PR:Q8L5Z1"/>
<dbReference type="Proteomes" id="UP000006548">
    <property type="component" value="Chromosome 1"/>
</dbReference>
<dbReference type="ExpressionAtlas" id="Q8L5Z1">
    <property type="expression patterns" value="baseline and differential"/>
</dbReference>
<dbReference type="GO" id="GO:0005576">
    <property type="term" value="C:extracellular region"/>
    <property type="evidence" value="ECO:0007669"/>
    <property type="project" value="UniProtKB-SubCell"/>
</dbReference>
<dbReference type="GO" id="GO:0016788">
    <property type="term" value="F:hydrolase activity, acting on ester bonds"/>
    <property type="evidence" value="ECO:0007669"/>
    <property type="project" value="InterPro"/>
</dbReference>
<dbReference type="GO" id="GO:0016042">
    <property type="term" value="P:lipid catabolic process"/>
    <property type="evidence" value="ECO:0007669"/>
    <property type="project" value="UniProtKB-KW"/>
</dbReference>
<dbReference type="CDD" id="cd01837">
    <property type="entry name" value="SGNH_plant_lipase_like"/>
    <property type="match status" value="1"/>
</dbReference>
<dbReference type="Gene3D" id="3.40.50.1110">
    <property type="entry name" value="SGNH hydrolase"/>
    <property type="match status" value="1"/>
</dbReference>
<dbReference type="InterPro" id="IPR001087">
    <property type="entry name" value="GDSL"/>
</dbReference>
<dbReference type="InterPro" id="IPR051238">
    <property type="entry name" value="GDSL_esterase/lipase"/>
</dbReference>
<dbReference type="InterPro" id="IPR036514">
    <property type="entry name" value="SGNH_hydro_sf"/>
</dbReference>
<dbReference type="InterPro" id="IPR035669">
    <property type="entry name" value="SGNH_plant_lipase-like"/>
</dbReference>
<dbReference type="PANTHER" id="PTHR45650">
    <property type="entry name" value="GDSL-LIKE LIPASE/ACYLHYDROLASE-RELATED"/>
    <property type="match status" value="1"/>
</dbReference>
<dbReference type="PANTHER" id="PTHR45650:SF12">
    <property type="entry name" value="ZINC FINGER PROTEIN"/>
    <property type="match status" value="1"/>
</dbReference>
<dbReference type="Pfam" id="PF00657">
    <property type="entry name" value="Lipase_GDSL"/>
    <property type="match status" value="1"/>
</dbReference>
<dbReference type="SUPFAM" id="SSF52266">
    <property type="entry name" value="SGNH hydrolase"/>
    <property type="match status" value="1"/>
</dbReference>
<sequence length="370" mass="41697">MGILRFVLLISLNLVLFGFKTTVSQPQQQAQVPCLFIFGDSLVDNGNNNRLLSLARANYRPYGIDFPQGTTGRFTNGRTYVDALAQILGFRNYIPPYSRIRGQAILRGANFASGAAGIRDETGDNLGAHTSMNQQVELYTTAVQQMLRYFRGDTNELQRYLSRCIFYSGMGSNDYLNNYFMPDFYSTSTNYNDKTFAESLIKNYTQQLTRLYQFGARKVIVTGVGQIGCIPYQLARYNNRNNSTGRCNEKINNAIVVFNTQVKKLVDRLNKGQLKGAKFVYLDSYKSTYDLAVNGAAYGFEVVDKGCCGVGRNNGQITCLPLQTPCPDRTKYLFWDAFHPTETANILLAKSNFYSRAYTYPINIQELANL</sequence>
<evidence type="ECO:0000250" key="1"/>
<evidence type="ECO:0000255" key="2"/>
<evidence type="ECO:0000305" key="3"/>
<accession>Q8L5Z1</accession>
<accession>Q9LQ33</accession>
<gene>
    <name type="ordered locus">At1g33811</name>
    <name type="ORF">F14M2.7</name>
</gene>
<name>GDL17_ARATH</name>
<proteinExistence type="evidence at transcript level"/>
<comment type="subcellular location">
    <subcellularLocation>
        <location evidence="3">Secreted</location>
    </subcellularLocation>
</comment>
<comment type="similarity">
    <text evidence="3">Belongs to the 'GDSL' lipolytic enzyme family.</text>
</comment>
<comment type="sequence caution" evidence="3">
    <conflict type="erroneous gene model prediction">
        <sequence resource="EMBL-CDS" id="AAF97292"/>
    </conflict>
</comment>
<keyword id="KW-0325">Glycoprotein</keyword>
<keyword id="KW-0378">Hydrolase</keyword>
<keyword id="KW-0442">Lipid degradation</keyword>
<keyword id="KW-0443">Lipid metabolism</keyword>
<keyword id="KW-1185">Reference proteome</keyword>
<keyword id="KW-0964">Secreted</keyword>
<keyword id="KW-0732">Signal</keyword>
<reference key="1">
    <citation type="journal article" date="2000" name="Nature">
        <title>Sequence and analysis of chromosome 1 of the plant Arabidopsis thaliana.</title>
        <authorList>
            <person name="Theologis A."/>
            <person name="Ecker J.R."/>
            <person name="Palm C.J."/>
            <person name="Federspiel N.A."/>
            <person name="Kaul S."/>
            <person name="White O."/>
            <person name="Alonso J."/>
            <person name="Altafi H."/>
            <person name="Araujo R."/>
            <person name="Bowman C.L."/>
            <person name="Brooks S.Y."/>
            <person name="Buehler E."/>
            <person name="Chan A."/>
            <person name="Chao Q."/>
            <person name="Chen H."/>
            <person name="Cheuk R.F."/>
            <person name="Chin C.W."/>
            <person name="Chung M.K."/>
            <person name="Conn L."/>
            <person name="Conway A.B."/>
            <person name="Conway A.R."/>
            <person name="Creasy T.H."/>
            <person name="Dewar K."/>
            <person name="Dunn P."/>
            <person name="Etgu P."/>
            <person name="Feldblyum T.V."/>
            <person name="Feng J.-D."/>
            <person name="Fong B."/>
            <person name="Fujii C.Y."/>
            <person name="Gill J.E."/>
            <person name="Goldsmith A.D."/>
            <person name="Haas B."/>
            <person name="Hansen N.F."/>
            <person name="Hughes B."/>
            <person name="Huizar L."/>
            <person name="Hunter J.L."/>
            <person name="Jenkins J."/>
            <person name="Johnson-Hopson C."/>
            <person name="Khan S."/>
            <person name="Khaykin E."/>
            <person name="Kim C.J."/>
            <person name="Koo H.L."/>
            <person name="Kremenetskaia I."/>
            <person name="Kurtz D.B."/>
            <person name="Kwan A."/>
            <person name="Lam B."/>
            <person name="Langin-Hooper S."/>
            <person name="Lee A."/>
            <person name="Lee J.M."/>
            <person name="Lenz C.A."/>
            <person name="Li J.H."/>
            <person name="Li Y.-P."/>
            <person name="Lin X."/>
            <person name="Liu S.X."/>
            <person name="Liu Z.A."/>
            <person name="Luros J.S."/>
            <person name="Maiti R."/>
            <person name="Marziali A."/>
            <person name="Militscher J."/>
            <person name="Miranda M."/>
            <person name="Nguyen M."/>
            <person name="Nierman W.C."/>
            <person name="Osborne B.I."/>
            <person name="Pai G."/>
            <person name="Peterson J."/>
            <person name="Pham P.K."/>
            <person name="Rizzo M."/>
            <person name="Rooney T."/>
            <person name="Rowley D."/>
            <person name="Sakano H."/>
            <person name="Salzberg S.L."/>
            <person name="Schwartz J.R."/>
            <person name="Shinn P."/>
            <person name="Southwick A.M."/>
            <person name="Sun H."/>
            <person name="Tallon L.J."/>
            <person name="Tambunga G."/>
            <person name="Toriumi M.J."/>
            <person name="Town C.D."/>
            <person name="Utterback T."/>
            <person name="Van Aken S."/>
            <person name="Vaysberg M."/>
            <person name="Vysotskaia V.S."/>
            <person name="Walker M."/>
            <person name="Wu D."/>
            <person name="Yu G."/>
            <person name="Fraser C.M."/>
            <person name="Venter J.C."/>
            <person name="Davis R.W."/>
        </authorList>
    </citation>
    <scope>NUCLEOTIDE SEQUENCE [LARGE SCALE GENOMIC DNA]</scope>
    <source>
        <strain>cv. Columbia</strain>
    </source>
</reference>
<reference key="2">
    <citation type="journal article" date="2017" name="Plant J.">
        <title>Araport11: a complete reannotation of the Arabidopsis thaliana reference genome.</title>
        <authorList>
            <person name="Cheng C.Y."/>
            <person name="Krishnakumar V."/>
            <person name="Chan A.P."/>
            <person name="Thibaud-Nissen F."/>
            <person name="Schobel S."/>
            <person name="Town C.D."/>
        </authorList>
    </citation>
    <scope>GENOME REANNOTATION</scope>
    <source>
        <strain>cv. Columbia</strain>
    </source>
</reference>
<reference key="3">
    <citation type="journal article" date="2003" name="Science">
        <title>Empirical analysis of transcriptional activity in the Arabidopsis genome.</title>
        <authorList>
            <person name="Yamada K."/>
            <person name="Lim J."/>
            <person name="Dale J.M."/>
            <person name="Chen H."/>
            <person name="Shinn P."/>
            <person name="Palm C.J."/>
            <person name="Southwick A.M."/>
            <person name="Wu H.C."/>
            <person name="Kim C.J."/>
            <person name="Nguyen M."/>
            <person name="Pham P.K."/>
            <person name="Cheuk R.F."/>
            <person name="Karlin-Newmann G."/>
            <person name="Liu S.X."/>
            <person name="Lam B."/>
            <person name="Sakano H."/>
            <person name="Wu T."/>
            <person name="Yu G."/>
            <person name="Miranda M."/>
            <person name="Quach H.L."/>
            <person name="Tripp M."/>
            <person name="Chang C.H."/>
            <person name="Lee J.M."/>
            <person name="Toriumi M.J."/>
            <person name="Chan M.M."/>
            <person name="Tang C.C."/>
            <person name="Onodera C.S."/>
            <person name="Deng J.M."/>
            <person name="Akiyama K."/>
            <person name="Ansari Y."/>
            <person name="Arakawa T."/>
            <person name="Banh J."/>
            <person name="Banno F."/>
            <person name="Bowser L."/>
            <person name="Brooks S.Y."/>
            <person name="Carninci P."/>
            <person name="Chao Q."/>
            <person name="Choy N."/>
            <person name="Enju A."/>
            <person name="Goldsmith A.D."/>
            <person name="Gurjal M."/>
            <person name="Hansen N.F."/>
            <person name="Hayashizaki Y."/>
            <person name="Johnson-Hopson C."/>
            <person name="Hsuan V.W."/>
            <person name="Iida K."/>
            <person name="Karnes M."/>
            <person name="Khan S."/>
            <person name="Koesema E."/>
            <person name="Ishida J."/>
            <person name="Jiang P.X."/>
            <person name="Jones T."/>
            <person name="Kawai J."/>
            <person name="Kamiya A."/>
            <person name="Meyers C."/>
            <person name="Nakajima M."/>
            <person name="Narusaka M."/>
            <person name="Seki M."/>
            <person name="Sakurai T."/>
            <person name="Satou M."/>
            <person name="Tamse R."/>
            <person name="Vaysberg M."/>
            <person name="Wallender E.K."/>
            <person name="Wong C."/>
            <person name="Yamamura Y."/>
            <person name="Yuan S."/>
            <person name="Shinozaki K."/>
            <person name="Davis R.W."/>
            <person name="Theologis A."/>
            <person name="Ecker J.R."/>
        </authorList>
    </citation>
    <scope>NUCLEOTIDE SEQUENCE [LARGE SCALE MRNA]</scope>
    <source>
        <strain>cv. Columbia</strain>
    </source>
</reference>
<reference key="4">
    <citation type="journal article" date="2004" name="Prog. Lipid Res.">
        <title>GDSL family of serine esterases/lipases.</title>
        <authorList>
            <person name="Akoh C.C."/>
            <person name="Lee G.-C."/>
            <person name="Liaw Y.-C."/>
            <person name="Huang T.-H."/>
            <person name="Shaw J.-F."/>
        </authorList>
    </citation>
    <scope>REVIEW</scope>
</reference>
<reference key="5">
    <citation type="journal article" date="2008" name="Pak. J. Biol. Sci.">
        <title>Sequence analysis of GDSL lipase gene family in Arabidopsis thaliana.</title>
        <authorList>
            <person name="Ling H."/>
        </authorList>
    </citation>
    <scope>GENE FAMILY</scope>
</reference>
<feature type="signal peptide" evidence="2">
    <location>
        <begin position="1"/>
        <end position="24"/>
    </location>
</feature>
<feature type="chain" id="PRO_0000367359" description="GDSL esterase/lipase At1g33811">
    <location>
        <begin position="25"/>
        <end position="370"/>
    </location>
</feature>
<feature type="active site" description="Nucleophile" evidence="1">
    <location>
        <position position="41"/>
    </location>
</feature>
<feature type="active site" evidence="1">
    <location>
        <position position="336"/>
    </location>
</feature>
<feature type="active site" evidence="1">
    <location>
        <position position="339"/>
    </location>
</feature>
<feature type="glycosylation site" description="N-linked (GlcNAc...) asparagine" evidence="2">
    <location>
        <position position="203"/>
    </location>
</feature>
<feature type="glycosylation site" description="N-linked (GlcNAc...) asparagine" evidence="2">
    <location>
        <position position="241"/>
    </location>
</feature>
<feature type="glycosylation site" description="N-linked (GlcNAc...) asparagine" evidence="2">
    <location>
        <position position="242"/>
    </location>
</feature>